<proteinExistence type="evidence at protein level"/>
<sequence length="228" mass="24663">MKVAADLSAFMDRLGHRFTTPEHLVRALTHSSLGSATRPDNQRLEFLGDRVLGLSMAEALFHADGRASEGQLAPRFNALVRKETCAAVARDIDLGAVLKLGRSEMMSGGRRKDALLGDAMEAVIAAVYLDAGFEVARALVLRLWAARIQSVDNDARDPKTALQEWAQARGLPPPRYETLGRDGPDHAPQFRIAVVLASGETEEAQAGSKRNAEQAAAKALLERLERGA</sequence>
<accession>Q52698</accession>
<gene>
    <name type="primary">rnc</name>
</gene>
<organism>
    <name type="scientific">Rhodobacter capsulatus</name>
    <name type="common">Rhodopseudomonas capsulata</name>
    <dbReference type="NCBI Taxonomy" id="1061"/>
    <lineage>
        <taxon>Bacteria</taxon>
        <taxon>Pseudomonadati</taxon>
        <taxon>Pseudomonadota</taxon>
        <taxon>Alphaproteobacteria</taxon>
        <taxon>Rhodobacterales</taxon>
        <taxon>Rhodobacter group</taxon>
        <taxon>Rhodobacter</taxon>
    </lineage>
</organism>
<protein>
    <recommendedName>
        <fullName>Ribonuclease 3</fullName>
        <ecNumber>3.1.26.3</ecNumber>
    </recommendedName>
    <alternativeName>
        <fullName>Ribonuclease III</fullName>
        <shortName>RNase III</shortName>
    </alternativeName>
</protein>
<reference key="1">
    <citation type="journal article" date="1996" name="Nucleic Acids Res.">
        <title>Identification and analysis of the rnc gene for RNase III in Rhodobacter capsulatus.</title>
        <authorList>
            <person name="Rauhut R."/>
            <person name="Jaeger A."/>
            <person name="Conrad C."/>
            <person name="Klug G."/>
        </authorList>
    </citation>
    <scope>NUCLEOTIDE SEQUENCE [GENOMIC DNA]</scope>
    <scope>FUNCTION IN RRNA PROCESSING</scope>
    <scope>EXPRESSION IN E.COLI</scope>
    <scope>DISRUPTION PHENOTYPE</scope>
    <source>
        <strain>ATCC 33303 / B10</strain>
        <strain>DSM 938 / 37b4</strain>
    </source>
</reference>
<reference key="2">
    <citation type="journal article" date="1994" name="J. Bacteriol.">
        <title>Cloning of a gene involved in rRNA precursor processing and 23S rRNA cleavage in Rhodobacter capsulatus.</title>
        <authorList>
            <person name="Kordes E."/>
            <person name="Jock S."/>
            <person name="Fritsch J."/>
            <person name="Bosch F."/>
            <person name="Klug G."/>
        </authorList>
    </citation>
    <scope>FUNCTION</scope>
    <source>
        <strain>DSM 938 / 37b4</strain>
    </source>
</reference>
<reference key="3">
    <citation type="journal article" date="1998" name="Nucleic Acids Res.">
        <title>Different cleavage specificities of RNases III from Rhodobacter capsulatus and Escherichia coli.</title>
        <authorList>
            <person name="Conrad C."/>
            <person name="Rauhut R."/>
            <person name="Klug G."/>
        </authorList>
    </citation>
    <scope>BIOPHYSICOCHEMICAL PROPERTIES</scope>
    <scope>COFACTOR</scope>
    <scope>FUNCTION IN RRNA PROCESSING</scope>
    <scope>RRNA-BINDING</scope>
    <scope>SUBSTRATE SPECIFICITY</scope>
    <source>
        <strain>ATCC 33303 / B10</strain>
    </source>
</reference>
<comment type="function">
    <text evidence="3 4 5">Digests double-stranded RNA. Involved in the processing of ribosomal RNA precursors and of some mRNAs. Complements an E.coli disruption mutant, but the E.coli enzyme does not cleave R.capsulatus rRNA precursor, showing substrate recognition is different. Probably also processes some mRNAs, and tRNAs when they are encoded in the rRNA operon. Probably processes pre-crRNA and tracrRNA of type II CRISPR loci if present in the organism.</text>
</comment>
<comment type="catalytic activity">
    <reaction>
        <text>Endonucleolytic cleavage to 5'-phosphomonoester.</text>
        <dbReference type="EC" id="3.1.26.3"/>
    </reaction>
</comment>
<comment type="cofactor">
    <cofactor evidence="5">
        <name>Mg(2+)</name>
        <dbReference type="ChEBI" id="CHEBI:18420"/>
    </cofactor>
</comment>
<comment type="biophysicochemical properties">
    <phDependence>
        <text evidence="5">Optimum pH is 7.5 at 32 degrees Celsius.</text>
    </phDependence>
</comment>
<comment type="subunit">
    <text evidence="1">Homodimer.</text>
</comment>
<comment type="subcellular location">
    <subcellularLocation>
        <location evidence="1">Cytoplasm</location>
    </subcellularLocation>
</comment>
<comment type="disruption phenotype">
    <text evidence="4">Loss of processing of 23S rRNA. Full complementation requires both lep and rnc genes, suggesting they form an operon.</text>
</comment>
<comment type="miscellaneous">
    <text>The protein in strain DMS 938 / 37b4 has 5 other sequence differences. In Rhodobacter species, 23S rRNA is further processed to 16S and 14S rRNA species in vivo, probably by RNase III.</text>
</comment>
<comment type="similarity">
    <text evidence="6">Belongs to the ribonuclease III family.</text>
</comment>
<feature type="chain" id="PRO_0000180427" description="Ribonuclease 3">
    <location>
        <begin position="1"/>
        <end position="228"/>
    </location>
</feature>
<feature type="domain" description="RNase III">
    <location>
        <begin position="7"/>
        <end position="132"/>
    </location>
</feature>
<feature type="domain" description="DRBM">
    <location>
        <begin position="157"/>
        <end position="226"/>
    </location>
</feature>
<feature type="active site" evidence="2">
    <location>
        <position position="49"/>
    </location>
</feature>
<feature type="active site" evidence="1">
    <location>
        <position position="121"/>
    </location>
</feature>
<feature type="binding site" evidence="1">
    <location>
        <position position="45"/>
    </location>
    <ligand>
        <name>Mg(2+)</name>
        <dbReference type="ChEBI" id="CHEBI:18420"/>
    </ligand>
</feature>
<feature type="binding site" evidence="1">
    <location>
        <position position="118"/>
    </location>
    <ligand>
        <name>Mg(2+)</name>
        <dbReference type="ChEBI" id="CHEBI:18420"/>
    </ligand>
</feature>
<feature type="binding site" evidence="1">
    <location>
        <position position="121"/>
    </location>
    <ligand>
        <name>Mg(2+)</name>
        <dbReference type="ChEBI" id="CHEBI:18420"/>
    </ligand>
</feature>
<feature type="sequence variant" description="In strain: DSM 938.">
    <original>H</original>
    <variation>D</variation>
    <location>
        <position position="62"/>
    </location>
</feature>
<evidence type="ECO:0000250" key="1"/>
<evidence type="ECO:0000255" key="2"/>
<evidence type="ECO:0000269" key="3">
    <source>
    </source>
</evidence>
<evidence type="ECO:0000269" key="4">
    <source>
    </source>
</evidence>
<evidence type="ECO:0000269" key="5">
    <source>
    </source>
</evidence>
<evidence type="ECO:0000305" key="6"/>
<keyword id="KW-0963">Cytoplasm</keyword>
<keyword id="KW-0255">Endonuclease</keyword>
<keyword id="KW-0378">Hydrolase</keyword>
<keyword id="KW-0460">Magnesium</keyword>
<keyword id="KW-0479">Metal-binding</keyword>
<keyword id="KW-0507">mRNA processing</keyword>
<keyword id="KW-0540">Nuclease</keyword>
<keyword id="KW-0694">RNA-binding</keyword>
<keyword id="KW-0698">rRNA processing</keyword>
<keyword id="KW-0699">rRNA-binding</keyword>
<keyword id="KW-0819">tRNA processing</keyword>
<name>RNC_RHOCA</name>
<dbReference type="EC" id="3.1.26.3"/>
<dbReference type="EMBL" id="Z68305">
    <property type="protein sequence ID" value="CAA92647.1"/>
    <property type="molecule type" value="Genomic_DNA"/>
</dbReference>
<dbReference type="PIR" id="S66596">
    <property type="entry name" value="S66596"/>
</dbReference>
<dbReference type="SMR" id="Q52698"/>
<dbReference type="GO" id="GO:0005737">
    <property type="term" value="C:cytoplasm"/>
    <property type="evidence" value="ECO:0007669"/>
    <property type="project" value="UniProtKB-SubCell"/>
</dbReference>
<dbReference type="GO" id="GO:0003725">
    <property type="term" value="F:double-stranded RNA binding"/>
    <property type="evidence" value="ECO:0007669"/>
    <property type="project" value="TreeGrafter"/>
</dbReference>
<dbReference type="GO" id="GO:0046872">
    <property type="term" value="F:metal ion binding"/>
    <property type="evidence" value="ECO:0007669"/>
    <property type="project" value="UniProtKB-KW"/>
</dbReference>
<dbReference type="GO" id="GO:0004525">
    <property type="term" value="F:ribonuclease III activity"/>
    <property type="evidence" value="ECO:0007669"/>
    <property type="project" value="UniProtKB-UniRule"/>
</dbReference>
<dbReference type="GO" id="GO:0019843">
    <property type="term" value="F:rRNA binding"/>
    <property type="evidence" value="ECO:0007669"/>
    <property type="project" value="UniProtKB-KW"/>
</dbReference>
<dbReference type="GO" id="GO:0006397">
    <property type="term" value="P:mRNA processing"/>
    <property type="evidence" value="ECO:0007669"/>
    <property type="project" value="UniProtKB-UniRule"/>
</dbReference>
<dbReference type="GO" id="GO:0010468">
    <property type="term" value="P:regulation of gene expression"/>
    <property type="evidence" value="ECO:0007669"/>
    <property type="project" value="TreeGrafter"/>
</dbReference>
<dbReference type="GO" id="GO:0006364">
    <property type="term" value="P:rRNA processing"/>
    <property type="evidence" value="ECO:0007669"/>
    <property type="project" value="UniProtKB-UniRule"/>
</dbReference>
<dbReference type="GO" id="GO:0008033">
    <property type="term" value="P:tRNA processing"/>
    <property type="evidence" value="ECO:0007669"/>
    <property type="project" value="UniProtKB-KW"/>
</dbReference>
<dbReference type="CDD" id="cd10845">
    <property type="entry name" value="DSRM_RNAse_III_family"/>
    <property type="match status" value="1"/>
</dbReference>
<dbReference type="CDD" id="cd00593">
    <property type="entry name" value="RIBOc"/>
    <property type="match status" value="1"/>
</dbReference>
<dbReference type="FunFam" id="1.10.1520.10:FF:000001">
    <property type="entry name" value="Ribonuclease 3"/>
    <property type="match status" value="1"/>
</dbReference>
<dbReference type="Gene3D" id="3.30.160.20">
    <property type="match status" value="1"/>
</dbReference>
<dbReference type="Gene3D" id="1.10.1520.10">
    <property type="entry name" value="Ribonuclease III domain"/>
    <property type="match status" value="1"/>
</dbReference>
<dbReference type="HAMAP" id="MF_00104">
    <property type="entry name" value="RNase_III"/>
    <property type="match status" value="1"/>
</dbReference>
<dbReference type="InterPro" id="IPR014720">
    <property type="entry name" value="dsRBD_dom"/>
</dbReference>
<dbReference type="InterPro" id="IPR011907">
    <property type="entry name" value="RNase_III"/>
</dbReference>
<dbReference type="InterPro" id="IPR000999">
    <property type="entry name" value="RNase_III_dom"/>
</dbReference>
<dbReference type="InterPro" id="IPR036389">
    <property type="entry name" value="RNase_III_sf"/>
</dbReference>
<dbReference type="NCBIfam" id="TIGR02191">
    <property type="entry name" value="RNaseIII"/>
    <property type="match status" value="1"/>
</dbReference>
<dbReference type="PANTHER" id="PTHR11207:SF0">
    <property type="entry name" value="RIBONUCLEASE 3"/>
    <property type="match status" value="1"/>
</dbReference>
<dbReference type="PANTHER" id="PTHR11207">
    <property type="entry name" value="RIBONUCLEASE III"/>
    <property type="match status" value="1"/>
</dbReference>
<dbReference type="Pfam" id="PF00035">
    <property type="entry name" value="dsrm"/>
    <property type="match status" value="1"/>
</dbReference>
<dbReference type="Pfam" id="PF14622">
    <property type="entry name" value="Ribonucleas_3_3"/>
    <property type="match status" value="1"/>
</dbReference>
<dbReference type="SMART" id="SM00358">
    <property type="entry name" value="DSRM"/>
    <property type="match status" value="1"/>
</dbReference>
<dbReference type="SMART" id="SM00535">
    <property type="entry name" value="RIBOc"/>
    <property type="match status" value="1"/>
</dbReference>
<dbReference type="SUPFAM" id="SSF54768">
    <property type="entry name" value="dsRNA-binding domain-like"/>
    <property type="match status" value="1"/>
</dbReference>
<dbReference type="SUPFAM" id="SSF69065">
    <property type="entry name" value="RNase III domain-like"/>
    <property type="match status" value="1"/>
</dbReference>
<dbReference type="PROSITE" id="PS50137">
    <property type="entry name" value="DS_RBD"/>
    <property type="match status" value="1"/>
</dbReference>
<dbReference type="PROSITE" id="PS00517">
    <property type="entry name" value="RNASE_3_1"/>
    <property type="match status" value="1"/>
</dbReference>
<dbReference type="PROSITE" id="PS50142">
    <property type="entry name" value="RNASE_3_2"/>
    <property type="match status" value="1"/>
</dbReference>